<comment type="function">
    <text evidence="4">Alpha-conotoxins act on postsynaptic membranes, they bind to the nicotinic acetylcholine receptors (nAChR) and thus inhibit them. Through its two C-terminal domains, this homodimeric protein would bind to two nAChR allosteric sites, located outside the nAChR C-loop of the principal binding face and at the adjacent binding interface in a clockwise direction. This toxin specifically blocks mammalian neuronal nAChR of the alpha-7/CHRNA7, alpha-3-beta-2/CHRNA3-CHRNB2 and alpha-4-beta-2/CHRNA4-CHRNB2 subtypes.</text>
</comment>
<comment type="subunit">
    <text evidence="3">Hetero-, homo- or pseudo-homodimer (identical sequence, different post-translational modifications).</text>
</comment>
<comment type="subcellular location">
    <subcellularLocation>
        <location evidence="8">Secreted</location>
    </subcellularLocation>
</comment>
<comment type="tissue specificity">
    <text evidence="8">Expressed by the venom duct.</text>
</comment>
<comment type="domain">
    <text evidence="7">The cysteine framework is XX (C-CC-C-CC-C-C-C-C).</text>
</comment>
<comment type="domain">
    <text evidence="4">Displays a mini-granulin fold, a structure composed of two short, stacked beta-hairpins connected by two parallel disulfide bonds. This newly described fold is derived from the same cysteine connectivity as knottins (ICK fold). The name 'mini-granulin fold' comes from the structural homology with the N-terminal region of the human granulin.</text>
</comment>
<comment type="similarity">
    <text evidence="7">Belongs to the conotoxin D superfamily.</text>
</comment>
<protein>
    <recommendedName>
        <fullName evidence="7">Alpha-conotoxin-like Mi20.3</fullName>
    </recommendedName>
    <alternativeName>
        <fullName evidence="6">Alpha-conotoxin-like Ml20.3</fullName>
    </alternativeName>
</protein>
<evidence type="ECO:0000250" key="1"/>
<evidence type="ECO:0000250" key="2">
    <source>
        <dbReference type="UniProtKB" id="A0A0A0VBX4"/>
    </source>
</evidence>
<evidence type="ECO:0000250" key="3">
    <source>
        <dbReference type="UniProtKB" id="C3VVN5"/>
    </source>
</evidence>
<evidence type="ECO:0000250" key="4">
    <source>
        <dbReference type="UniProtKB" id="P0C1W6"/>
    </source>
</evidence>
<evidence type="ECO:0000255" key="5"/>
<evidence type="ECO:0000303" key="6">
    <source>
    </source>
</evidence>
<evidence type="ECO:0000305" key="7"/>
<evidence type="ECO:0000305" key="8">
    <source>
    </source>
</evidence>
<name>CXAT3_CONMI</name>
<reference key="1">
    <citation type="journal article" date="2009" name="Biochemistry">
        <title>Novel alpha D-conopeptides and their precursors identified by cDNA cloning define the D-conotoxin superfamily.</title>
        <authorList>
            <person name="Loughnan M.L."/>
            <person name="Nicke A."/>
            <person name="Lawrence N."/>
            <person name="Lewis R.J."/>
        </authorList>
    </citation>
    <scope>NUCLEOTIDE SEQUENCE [MRNA]</scope>
    <source>
        <tissue>Venom duct</tissue>
    </source>
</reference>
<organism>
    <name type="scientific">Conus miles</name>
    <name type="common">Soldier cone</name>
    <name type="synonym">Mile cone</name>
    <dbReference type="NCBI Taxonomy" id="69564"/>
    <lineage>
        <taxon>Eukaryota</taxon>
        <taxon>Metazoa</taxon>
        <taxon>Spiralia</taxon>
        <taxon>Lophotrochozoa</taxon>
        <taxon>Mollusca</taxon>
        <taxon>Gastropoda</taxon>
        <taxon>Caenogastropoda</taxon>
        <taxon>Neogastropoda</taxon>
        <taxon>Conoidea</taxon>
        <taxon>Conidae</taxon>
        <taxon>Conus</taxon>
        <taxon>Rhizoconus</taxon>
    </lineage>
</organism>
<keyword id="KW-0008">Acetylcholine receptor inhibiting toxin</keyword>
<keyword id="KW-1015">Disulfide bond</keyword>
<keyword id="KW-0379">Hydroxylation</keyword>
<keyword id="KW-0872">Ion channel impairing toxin</keyword>
<keyword id="KW-0528">Neurotoxin</keyword>
<keyword id="KW-0629">Postsynaptic neurotoxin</keyword>
<keyword id="KW-0964">Secreted</keyword>
<keyword id="KW-0732">Signal</keyword>
<keyword id="KW-0800">Toxin</keyword>
<sequence>MPKLEMMLLVLLILPLSYFSAAGGQVVQGDWRGDGLARYLQRGDRDAQGCQVVTPGSKWGRCCLNRVCGPMCCPASHCYCIYHRGRGHGCSC</sequence>
<proteinExistence type="inferred from homology"/>
<dbReference type="SMR" id="P0CE32"/>
<dbReference type="GO" id="GO:0005576">
    <property type="term" value="C:extracellular region"/>
    <property type="evidence" value="ECO:0007669"/>
    <property type="project" value="UniProtKB-SubCell"/>
</dbReference>
<dbReference type="GO" id="GO:0035792">
    <property type="term" value="C:host cell postsynaptic membrane"/>
    <property type="evidence" value="ECO:0007669"/>
    <property type="project" value="UniProtKB-KW"/>
</dbReference>
<dbReference type="GO" id="GO:0030550">
    <property type="term" value="F:acetylcholine receptor inhibitor activity"/>
    <property type="evidence" value="ECO:0007669"/>
    <property type="project" value="UniProtKB-KW"/>
</dbReference>
<dbReference type="GO" id="GO:0099106">
    <property type="term" value="F:ion channel regulator activity"/>
    <property type="evidence" value="ECO:0007669"/>
    <property type="project" value="UniProtKB-KW"/>
</dbReference>
<dbReference type="GO" id="GO:0090729">
    <property type="term" value="F:toxin activity"/>
    <property type="evidence" value="ECO:0007669"/>
    <property type="project" value="UniProtKB-KW"/>
</dbReference>
<feature type="signal peptide" evidence="5">
    <location>
        <begin position="1"/>
        <end position="24"/>
    </location>
</feature>
<feature type="propeptide" id="PRO_0000391822">
    <location>
        <begin position="25"/>
        <end position="45"/>
    </location>
</feature>
<feature type="chain" id="PRO_0000391823" description="Alpha-conotoxin-like Mi20.3">
    <location>
        <begin position="46"/>
        <end position="92"/>
    </location>
</feature>
<feature type="modified residue" description="4-hydroxyproline" evidence="1">
    <location>
        <position position="55"/>
    </location>
</feature>
<feature type="disulfide bond" description="Interchain (with C-63)" evidence="2">
    <location>
        <position position="50"/>
    </location>
</feature>
<feature type="disulfide bond" description="Interchain (with C-51)" evidence="2">
    <location>
        <position position="62"/>
    </location>
</feature>
<feature type="disulfide bond" evidence="2">
    <location>
        <begin position="63"/>
        <end position="72"/>
    </location>
</feature>
<feature type="disulfide bond" evidence="2">
    <location>
        <begin position="68"/>
        <end position="80"/>
    </location>
</feature>
<feature type="disulfide bond" evidence="2">
    <location>
        <begin position="73"/>
        <end position="90"/>
    </location>
</feature>
<feature type="disulfide bond" evidence="2">
    <location>
        <begin position="78"/>
        <end position="92"/>
    </location>
</feature>
<accession>P0CE32</accession>